<accession>Q8XUX6</accession>
<feature type="signal peptide" description="Tat-type signal" evidence="2">
    <location>
        <begin position="1"/>
        <end position="28"/>
    </location>
</feature>
<feature type="chain" id="PRO_0000020210" description="Glucans biosynthesis protein D 1">
    <location>
        <begin position="29"/>
        <end position="535"/>
    </location>
</feature>
<feature type="region of interest" description="Insert">
    <location>
        <begin position="275"/>
        <end position="287"/>
    </location>
</feature>
<name>OPGD1_RALN1</name>
<evidence type="ECO:0000250" key="1"/>
<evidence type="ECO:0000255" key="2"/>
<evidence type="ECO:0000305" key="3"/>
<gene>
    <name type="primary">opgD1</name>
    <name type="ordered locus">RSc3057</name>
    <name type="ORF">RS00501</name>
</gene>
<comment type="function">
    <text evidence="1">Probably involved in the control of the structural glucose backbone of osmoregulated periplasmic glucans (OPGs).</text>
</comment>
<comment type="pathway">
    <text>Glycan metabolism; osmoregulated periplasmic glucan (OPG) biosynthesis.</text>
</comment>
<comment type="subcellular location">
    <subcellularLocation>
        <location evidence="1">Periplasm</location>
    </subcellularLocation>
</comment>
<comment type="PTM">
    <text>Predicted to be exported by the Tat system. The position of the signal peptide cleavage has not been experimentally proven.</text>
</comment>
<comment type="similarity">
    <text evidence="3">Belongs to the OpgD/OpgG family.</text>
</comment>
<comment type="sequence caution" evidence="3">
    <conflict type="erroneous initiation">
        <sequence resource="EMBL-CDS" id="CAD16766"/>
    </conflict>
</comment>
<sequence length="535" mass="58844">MHRRDLLKQLAAGFLALAPGLTPSTASAVSPASAATEPFDEAWLRRRARALAAGPYRKRNTALPPPLAALGWDAYQSIGARADHALWAGQSLPFDARFFHLGLFFKSPVRMHEVAGGQSRVIAYDPAMFDYGKSGLDHAALPADLGFAGFRLTTRADPTRDVAAFLGASYFRAVGGQWQYGMSARGLAIDTGLRRAEEFPDFTEFWLVRPAPEADTLRVYALLDAPSVAGAYRFDIRPGDTLVMDVQATLFVRKPIERLGIAPLTSMFLYGENDRTDRAGDRQSAARRWRASDWRPEIHDSDGLAIWRGSGEWIWRPLANPPALRSQRFADDGPRGFGLLQRDRNPDHYQDDGVFYEKRPSVWVEPAHGWGEGAVELVELSAADETFDNIVAFWRPAVAPQAGQELAFGYRLSWGAQPPVAPPLARVVATRTGIGGIVGQPRRHFSWRFVIDFAGGELGQPGRAAVEPVIRVSRGRVEIVSARPLANIDGVRAMFDLVPDAGNAPIELQLTLQSGDRPLSETWAYQWTPPADRAV</sequence>
<protein>
    <recommendedName>
        <fullName>Glucans biosynthesis protein D 1</fullName>
    </recommendedName>
</protein>
<organism>
    <name type="scientific">Ralstonia nicotianae (strain ATCC BAA-1114 / GMI1000)</name>
    <name type="common">Ralstonia solanacearum</name>
    <dbReference type="NCBI Taxonomy" id="267608"/>
    <lineage>
        <taxon>Bacteria</taxon>
        <taxon>Pseudomonadati</taxon>
        <taxon>Pseudomonadota</taxon>
        <taxon>Betaproteobacteria</taxon>
        <taxon>Burkholderiales</taxon>
        <taxon>Burkholderiaceae</taxon>
        <taxon>Ralstonia</taxon>
        <taxon>Ralstonia solanacearum species complex</taxon>
    </lineage>
</organism>
<proteinExistence type="inferred from homology"/>
<keyword id="KW-0574">Periplasm</keyword>
<keyword id="KW-1185">Reference proteome</keyword>
<keyword id="KW-0732">Signal</keyword>
<dbReference type="EMBL" id="AL646052">
    <property type="protein sequence ID" value="CAD16766.1"/>
    <property type="status" value="ALT_INIT"/>
    <property type="molecule type" value="Genomic_DNA"/>
</dbReference>
<dbReference type="RefSeq" id="WP_043876668.1">
    <property type="nucleotide sequence ID" value="NC_003295.1"/>
</dbReference>
<dbReference type="SMR" id="Q8XUX6"/>
<dbReference type="STRING" id="267608.RSc3057"/>
<dbReference type="EnsemblBacteria" id="CAD16766">
    <property type="protein sequence ID" value="CAD16766"/>
    <property type="gene ID" value="RSc3057"/>
</dbReference>
<dbReference type="KEGG" id="rso:RSc3057"/>
<dbReference type="PATRIC" id="fig|267608.8.peg.3118"/>
<dbReference type="eggNOG" id="COG3131">
    <property type="taxonomic scope" value="Bacteria"/>
</dbReference>
<dbReference type="HOGENOM" id="CLU_023403_2_0_4"/>
<dbReference type="UniPathway" id="UPA00637"/>
<dbReference type="Proteomes" id="UP000001436">
    <property type="component" value="Chromosome"/>
</dbReference>
<dbReference type="GO" id="GO:0030288">
    <property type="term" value="C:outer membrane-bounded periplasmic space"/>
    <property type="evidence" value="ECO:0007669"/>
    <property type="project" value="TreeGrafter"/>
</dbReference>
<dbReference type="GO" id="GO:0030246">
    <property type="term" value="F:carbohydrate binding"/>
    <property type="evidence" value="ECO:0007669"/>
    <property type="project" value="InterPro"/>
</dbReference>
<dbReference type="GO" id="GO:0003824">
    <property type="term" value="F:catalytic activity"/>
    <property type="evidence" value="ECO:0007669"/>
    <property type="project" value="InterPro"/>
</dbReference>
<dbReference type="GO" id="GO:0051274">
    <property type="term" value="P:beta-glucan biosynthetic process"/>
    <property type="evidence" value="ECO:0007669"/>
    <property type="project" value="TreeGrafter"/>
</dbReference>
<dbReference type="FunFam" id="2.70.98.10:FF:000001">
    <property type="entry name" value="Glucans biosynthesis protein G"/>
    <property type="match status" value="1"/>
</dbReference>
<dbReference type="Gene3D" id="2.70.98.10">
    <property type="match status" value="1"/>
</dbReference>
<dbReference type="Gene3D" id="2.60.40.10">
    <property type="entry name" value="Immunoglobulins"/>
    <property type="match status" value="1"/>
</dbReference>
<dbReference type="HAMAP" id="MF_01068">
    <property type="entry name" value="MdoD_OpgD"/>
    <property type="match status" value="1"/>
</dbReference>
<dbReference type="InterPro" id="IPR011013">
    <property type="entry name" value="Gal_mutarotase_sf_dom"/>
</dbReference>
<dbReference type="InterPro" id="IPR014718">
    <property type="entry name" value="GH-type_carb-bd"/>
</dbReference>
<dbReference type="InterPro" id="IPR023724">
    <property type="entry name" value="Glucan_biosyn_MdoD"/>
</dbReference>
<dbReference type="InterPro" id="IPR014438">
    <property type="entry name" value="Glucan_biosyn_MdoG/MdoD"/>
</dbReference>
<dbReference type="InterPro" id="IPR007444">
    <property type="entry name" value="Glucan_biosyn_MdoG_C"/>
</dbReference>
<dbReference type="InterPro" id="IPR013783">
    <property type="entry name" value="Ig-like_fold"/>
</dbReference>
<dbReference type="InterPro" id="IPR014756">
    <property type="entry name" value="Ig_E-set"/>
</dbReference>
<dbReference type="InterPro" id="IPR006311">
    <property type="entry name" value="TAT_signal"/>
</dbReference>
<dbReference type="PANTHER" id="PTHR30504">
    <property type="entry name" value="GLUCANS BIOSYNTHESIS PROTEIN"/>
    <property type="match status" value="1"/>
</dbReference>
<dbReference type="PANTHER" id="PTHR30504:SF3">
    <property type="entry name" value="GLUCANS BIOSYNTHESIS PROTEIN D"/>
    <property type="match status" value="1"/>
</dbReference>
<dbReference type="Pfam" id="PF04349">
    <property type="entry name" value="MdoG"/>
    <property type="match status" value="1"/>
</dbReference>
<dbReference type="PIRSF" id="PIRSF006281">
    <property type="entry name" value="MdoG"/>
    <property type="match status" value="1"/>
</dbReference>
<dbReference type="SUPFAM" id="SSF81296">
    <property type="entry name" value="E set domains"/>
    <property type="match status" value="1"/>
</dbReference>
<dbReference type="SUPFAM" id="SSF74650">
    <property type="entry name" value="Galactose mutarotase-like"/>
    <property type="match status" value="1"/>
</dbReference>
<dbReference type="PROSITE" id="PS51318">
    <property type="entry name" value="TAT"/>
    <property type="match status" value="1"/>
</dbReference>
<reference key="1">
    <citation type="journal article" date="2002" name="Nature">
        <title>Genome sequence of the plant pathogen Ralstonia solanacearum.</title>
        <authorList>
            <person name="Salanoubat M."/>
            <person name="Genin S."/>
            <person name="Artiguenave F."/>
            <person name="Gouzy J."/>
            <person name="Mangenot S."/>
            <person name="Arlat M."/>
            <person name="Billault A."/>
            <person name="Brottier P."/>
            <person name="Camus J.-C."/>
            <person name="Cattolico L."/>
            <person name="Chandler M."/>
            <person name="Choisne N."/>
            <person name="Claudel-Renard C."/>
            <person name="Cunnac S."/>
            <person name="Demange N."/>
            <person name="Gaspin C."/>
            <person name="Lavie M."/>
            <person name="Moisan A."/>
            <person name="Robert C."/>
            <person name="Saurin W."/>
            <person name="Schiex T."/>
            <person name="Siguier P."/>
            <person name="Thebault P."/>
            <person name="Whalen M."/>
            <person name="Wincker P."/>
            <person name="Levy M."/>
            <person name="Weissenbach J."/>
            <person name="Boucher C.A."/>
        </authorList>
    </citation>
    <scope>NUCLEOTIDE SEQUENCE [LARGE SCALE GENOMIC DNA]</scope>
    <source>
        <strain>ATCC BAA-1114 / GMI1000</strain>
    </source>
</reference>